<keyword id="KW-0067">ATP-binding</keyword>
<keyword id="KW-0378">Hydrolase</keyword>
<keyword id="KW-0460">Magnesium</keyword>
<keyword id="KW-0479">Metal-binding</keyword>
<keyword id="KW-0511">Multifunctional enzyme</keyword>
<keyword id="KW-0533">Nickel</keyword>
<keyword id="KW-0547">Nucleotide-binding</keyword>
<keyword id="KW-0548">Nucleotidyltransferase</keyword>
<keyword id="KW-1185">Reference proteome</keyword>
<keyword id="KW-0692">RNA repair</keyword>
<keyword id="KW-0694">RNA-binding</keyword>
<keyword id="KW-0808">Transferase</keyword>
<keyword id="KW-0819">tRNA processing</keyword>
<name>CCA_AROAE</name>
<proteinExistence type="inferred from homology"/>
<feature type="chain" id="PRO_0000138971" description="Multifunctional CCA protein">
    <location>
        <begin position="1"/>
        <end position="407"/>
    </location>
</feature>
<feature type="domain" description="HD" evidence="1">
    <location>
        <begin position="226"/>
        <end position="327"/>
    </location>
</feature>
<feature type="binding site" evidence="1">
    <location>
        <position position="8"/>
    </location>
    <ligand>
        <name>ATP</name>
        <dbReference type="ChEBI" id="CHEBI:30616"/>
    </ligand>
</feature>
<feature type="binding site" evidence="1">
    <location>
        <position position="8"/>
    </location>
    <ligand>
        <name>CTP</name>
        <dbReference type="ChEBI" id="CHEBI:37563"/>
    </ligand>
</feature>
<feature type="binding site" evidence="1">
    <location>
        <position position="11"/>
    </location>
    <ligand>
        <name>ATP</name>
        <dbReference type="ChEBI" id="CHEBI:30616"/>
    </ligand>
</feature>
<feature type="binding site" evidence="1">
    <location>
        <position position="11"/>
    </location>
    <ligand>
        <name>CTP</name>
        <dbReference type="ChEBI" id="CHEBI:37563"/>
    </ligand>
</feature>
<feature type="binding site" evidence="1">
    <location>
        <position position="21"/>
    </location>
    <ligand>
        <name>Mg(2+)</name>
        <dbReference type="ChEBI" id="CHEBI:18420"/>
    </ligand>
</feature>
<feature type="binding site" evidence="1">
    <location>
        <position position="23"/>
    </location>
    <ligand>
        <name>Mg(2+)</name>
        <dbReference type="ChEBI" id="CHEBI:18420"/>
    </ligand>
</feature>
<feature type="binding site" evidence="1">
    <location>
        <position position="91"/>
    </location>
    <ligand>
        <name>ATP</name>
        <dbReference type="ChEBI" id="CHEBI:30616"/>
    </ligand>
</feature>
<feature type="binding site" evidence="1">
    <location>
        <position position="91"/>
    </location>
    <ligand>
        <name>CTP</name>
        <dbReference type="ChEBI" id="CHEBI:37563"/>
    </ligand>
</feature>
<feature type="binding site" evidence="1">
    <location>
        <position position="137"/>
    </location>
    <ligand>
        <name>ATP</name>
        <dbReference type="ChEBI" id="CHEBI:30616"/>
    </ligand>
</feature>
<feature type="binding site" evidence="1">
    <location>
        <position position="137"/>
    </location>
    <ligand>
        <name>CTP</name>
        <dbReference type="ChEBI" id="CHEBI:37563"/>
    </ligand>
</feature>
<feature type="binding site" evidence="1">
    <location>
        <position position="140"/>
    </location>
    <ligand>
        <name>ATP</name>
        <dbReference type="ChEBI" id="CHEBI:30616"/>
    </ligand>
</feature>
<feature type="binding site" evidence="1">
    <location>
        <position position="140"/>
    </location>
    <ligand>
        <name>CTP</name>
        <dbReference type="ChEBI" id="CHEBI:37563"/>
    </ligand>
</feature>
<gene>
    <name evidence="1" type="primary">cca</name>
    <name type="ordered locus">AZOSEA19090</name>
    <name type="ORF">ebA3379</name>
</gene>
<sequence length="407" mass="45201">MRVYVVGGAVRDRLLGLPVQDHDWVVVGATPDEMLARGFRAVGKDFPVFLHPRTGEEYALARTERKSGRGYTGFTVHASPDVTLEEDLRRRDLTINAMAQDEDGTLIDPYGGRRDLENRVFRHVSEAFAEDPVRVLRVARFAARFEGFSVAGETLALMRTMVDDGEVDHLVAERVWQELARGLMETRPSRMFAVLRECCALARILPEVDRLFGVPQPPQHHPEVDTGIHVMAVVDHAAATAQPLAVRWACLLHDLGKADTPVHVLPHHYGHEAKSADRARAVSERLKAPLECRDLAVLLAREHGILHQARALRPVTIVKLLERTDALRRPERFGLLLEAAACDFHGRPGMAERPYVQAAIWQAALAAVRSVDAGAIARSCTDKASIPQRVHEARVAAVKARHAEEKD</sequence>
<reference key="1">
    <citation type="journal article" date="2005" name="Arch. Microbiol.">
        <title>The genome sequence of an anaerobic aromatic-degrading denitrifying bacterium, strain EbN1.</title>
        <authorList>
            <person name="Rabus R."/>
            <person name="Kube M."/>
            <person name="Heider J."/>
            <person name="Beck A."/>
            <person name="Heitmann K."/>
            <person name="Widdel F."/>
            <person name="Reinhardt R."/>
        </authorList>
    </citation>
    <scope>NUCLEOTIDE SEQUENCE [LARGE SCALE GENOMIC DNA]</scope>
    <source>
        <strain>DSM 19018 / LMG 30748 / EbN1</strain>
    </source>
</reference>
<organism>
    <name type="scientific">Aromatoleum aromaticum (strain DSM 19018 / LMG 30748 / EbN1)</name>
    <name type="common">Azoarcus sp. (strain EbN1)</name>
    <dbReference type="NCBI Taxonomy" id="76114"/>
    <lineage>
        <taxon>Bacteria</taxon>
        <taxon>Pseudomonadati</taxon>
        <taxon>Pseudomonadota</taxon>
        <taxon>Betaproteobacteria</taxon>
        <taxon>Rhodocyclales</taxon>
        <taxon>Rhodocyclaceae</taxon>
        <taxon>Aromatoleum</taxon>
    </lineage>
</organism>
<accession>Q5P3T0</accession>
<evidence type="ECO:0000255" key="1">
    <source>
        <dbReference type="HAMAP-Rule" id="MF_01261"/>
    </source>
</evidence>
<comment type="function">
    <text evidence="1">Catalyzes the addition and repair of the essential 3'-terminal CCA sequence in tRNAs without using a nucleic acid template. Adds these three nucleotides in the order of C, C, and A to the tRNA nucleotide-73, using CTP and ATP as substrates and producing inorganic pyrophosphate. tRNA 3'-terminal CCA addition is required both for tRNA processing and repair. Also involved in tRNA surveillance by mediating tandem CCA addition to generate a CCACCA at the 3' terminus of unstable tRNAs. While stable tRNAs receive only 3'-terminal CCA, unstable tRNAs are marked with CCACCA and rapidly degraded.</text>
</comment>
<comment type="catalytic activity">
    <reaction evidence="1">
        <text>a tRNA precursor + 2 CTP + ATP = a tRNA with a 3' CCA end + 3 diphosphate</text>
        <dbReference type="Rhea" id="RHEA:14433"/>
        <dbReference type="Rhea" id="RHEA-COMP:10465"/>
        <dbReference type="Rhea" id="RHEA-COMP:10468"/>
        <dbReference type="ChEBI" id="CHEBI:30616"/>
        <dbReference type="ChEBI" id="CHEBI:33019"/>
        <dbReference type="ChEBI" id="CHEBI:37563"/>
        <dbReference type="ChEBI" id="CHEBI:74896"/>
        <dbReference type="ChEBI" id="CHEBI:83071"/>
        <dbReference type="EC" id="2.7.7.72"/>
    </reaction>
</comment>
<comment type="catalytic activity">
    <reaction evidence="1">
        <text>a tRNA with a 3' CCA end + 2 CTP + ATP = a tRNA with a 3' CCACCA end + 3 diphosphate</text>
        <dbReference type="Rhea" id="RHEA:76235"/>
        <dbReference type="Rhea" id="RHEA-COMP:10468"/>
        <dbReference type="Rhea" id="RHEA-COMP:18655"/>
        <dbReference type="ChEBI" id="CHEBI:30616"/>
        <dbReference type="ChEBI" id="CHEBI:33019"/>
        <dbReference type="ChEBI" id="CHEBI:37563"/>
        <dbReference type="ChEBI" id="CHEBI:83071"/>
        <dbReference type="ChEBI" id="CHEBI:195187"/>
    </reaction>
    <physiologicalReaction direction="left-to-right" evidence="1">
        <dbReference type="Rhea" id="RHEA:76236"/>
    </physiologicalReaction>
</comment>
<comment type="cofactor">
    <cofactor evidence="1">
        <name>Mg(2+)</name>
        <dbReference type="ChEBI" id="CHEBI:18420"/>
    </cofactor>
    <text evidence="1">Magnesium is required for nucleotidyltransferase activity.</text>
</comment>
<comment type="cofactor">
    <cofactor evidence="1">
        <name>Ni(2+)</name>
        <dbReference type="ChEBI" id="CHEBI:49786"/>
    </cofactor>
    <text evidence="1">Nickel for phosphatase activity.</text>
</comment>
<comment type="subunit">
    <text evidence="1">Monomer. Can also form homodimers and oligomers.</text>
</comment>
<comment type="domain">
    <text evidence="1">Comprises two domains: an N-terminal domain containing the nucleotidyltransferase activity and a C-terminal HD domain associated with both phosphodiesterase and phosphatase activities.</text>
</comment>
<comment type="miscellaneous">
    <text evidence="1">A single active site specifically recognizes both ATP and CTP and is responsible for their addition.</text>
</comment>
<comment type="similarity">
    <text evidence="1">Belongs to the tRNA nucleotidyltransferase/poly(A) polymerase family. Bacterial CCA-adding enzyme type 1 subfamily.</text>
</comment>
<protein>
    <recommendedName>
        <fullName evidence="1">Multifunctional CCA protein</fullName>
    </recommendedName>
    <domain>
        <recommendedName>
            <fullName evidence="1">CCA-adding enzyme</fullName>
            <ecNumber evidence="1">2.7.7.72</ecNumber>
        </recommendedName>
        <alternativeName>
            <fullName evidence="1">CCA tRNA nucleotidyltransferase</fullName>
        </alternativeName>
        <alternativeName>
            <fullName evidence="1">tRNA CCA-pyrophosphorylase</fullName>
        </alternativeName>
        <alternativeName>
            <fullName evidence="1">tRNA adenylyl-/cytidylyl-transferase</fullName>
        </alternativeName>
        <alternativeName>
            <fullName evidence="1">tRNA nucleotidyltransferase</fullName>
        </alternativeName>
        <alternativeName>
            <fullName evidence="1">tRNA-NT</fullName>
        </alternativeName>
    </domain>
    <domain>
        <recommendedName>
            <fullName evidence="1">2'-nucleotidase</fullName>
            <ecNumber evidence="1">3.1.3.-</ecNumber>
        </recommendedName>
    </domain>
    <domain>
        <recommendedName>
            <fullName evidence="1">2',3'-cyclic phosphodiesterase</fullName>
            <ecNumber evidence="1">3.1.4.-</ecNumber>
        </recommendedName>
    </domain>
    <domain>
        <recommendedName>
            <fullName evidence="1">Phosphatase</fullName>
            <ecNumber evidence="1">3.1.3.-</ecNumber>
        </recommendedName>
    </domain>
</protein>
<dbReference type="EC" id="2.7.7.72" evidence="1"/>
<dbReference type="EC" id="3.1.3.-" evidence="1"/>
<dbReference type="EC" id="3.1.4.-" evidence="1"/>
<dbReference type="EMBL" id="CR555306">
    <property type="protein sequence ID" value="CAI08034.1"/>
    <property type="molecule type" value="Genomic_DNA"/>
</dbReference>
<dbReference type="RefSeq" id="WP_011237727.1">
    <property type="nucleotide sequence ID" value="NC_006513.1"/>
</dbReference>
<dbReference type="SMR" id="Q5P3T0"/>
<dbReference type="STRING" id="76114.ebA3379"/>
<dbReference type="KEGG" id="eba:ebA3379"/>
<dbReference type="eggNOG" id="COG0617">
    <property type="taxonomic scope" value="Bacteria"/>
</dbReference>
<dbReference type="HOGENOM" id="CLU_015961_1_1_4"/>
<dbReference type="OrthoDB" id="9805698at2"/>
<dbReference type="Proteomes" id="UP000006552">
    <property type="component" value="Chromosome"/>
</dbReference>
<dbReference type="GO" id="GO:0005524">
    <property type="term" value="F:ATP binding"/>
    <property type="evidence" value="ECO:0007669"/>
    <property type="project" value="UniProtKB-UniRule"/>
</dbReference>
<dbReference type="GO" id="GO:0004810">
    <property type="term" value="F:CCA tRNA nucleotidyltransferase activity"/>
    <property type="evidence" value="ECO:0007669"/>
    <property type="project" value="UniProtKB-UniRule"/>
</dbReference>
<dbReference type="GO" id="GO:0004112">
    <property type="term" value="F:cyclic-nucleotide phosphodiesterase activity"/>
    <property type="evidence" value="ECO:0007669"/>
    <property type="project" value="UniProtKB-UniRule"/>
</dbReference>
<dbReference type="GO" id="GO:0000287">
    <property type="term" value="F:magnesium ion binding"/>
    <property type="evidence" value="ECO:0007669"/>
    <property type="project" value="UniProtKB-UniRule"/>
</dbReference>
<dbReference type="GO" id="GO:0016791">
    <property type="term" value="F:phosphatase activity"/>
    <property type="evidence" value="ECO:0007669"/>
    <property type="project" value="UniProtKB-UniRule"/>
</dbReference>
<dbReference type="GO" id="GO:0000049">
    <property type="term" value="F:tRNA binding"/>
    <property type="evidence" value="ECO:0007669"/>
    <property type="project" value="UniProtKB-UniRule"/>
</dbReference>
<dbReference type="GO" id="GO:0042245">
    <property type="term" value="P:RNA repair"/>
    <property type="evidence" value="ECO:0007669"/>
    <property type="project" value="UniProtKB-KW"/>
</dbReference>
<dbReference type="GO" id="GO:0001680">
    <property type="term" value="P:tRNA 3'-terminal CCA addition"/>
    <property type="evidence" value="ECO:0007669"/>
    <property type="project" value="UniProtKB-UniRule"/>
</dbReference>
<dbReference type="CDD" id="cd00077">
    <property type="entry name" value="HDc"/>
    <property type="match status" value="1"/>
</dbReference>
<dbReference type="CDD" id="cd05398">
    <property type="entry name" value="NT_ClassII-CCAase"/>
    <property type="match status" value="1"/>
</dbReference>
<dbReference type="FunFam" id="3.30.460.10:FF:000016">
    <property type="entry name" value="Multifunctional CCA protein"/>
    <property type="match status" value="1"/>
</dbReference>
<dbReference type="Gene3D" id="3.30.460.10">
    <property type="entry name" value="Beta Polymerase, domain 2"/>
    <property type="match status" value="1"/>
</dbReference>
<dbReference type="Gene3D" id="1.10.3090.10">
    <property type="entry name" value="cca-adding enzyme, domain 2"/>
    <property type="match status" value="1"/>
</dbReference>
<dbReference type="HAMAP" id="MF_01261">
    <property type="entry name" value="CCA_bact_type1"/>
    <property type="match status" value="1"/>
</dbReference>
<dbReference type="HAMAP" id="MF_01262">
    <property type="entry name" value="CCA_bact_type2"/>
    <property type="match status" value="1"/>
</dbReference>
<dbReference type="InterPro" id="IPR012006">
    <property type="entry name" value="CCA_bact"/>
</dbReference>
<dbReference type="InterPro" id="IPR003607">
    <property type="entry name" value="HD/PDEase_dom"/>
</dbReference>
<dbReference type="InterPro" id="IPR006674">
    <property type="entry name" value="HD_domain"/>
</dbReference>
<dbReference type="InterPro" id="IPR043519">
    <property type="entry name" value="NT_sf"/>
</dbReference>
<dbReference type="InterPro" id="IPR002646">
    <property type="entry name" value="PolA_pol_head_dom"/>
</dbReference>
<dbReference type="InterPro" id="IPR032828">
    <property type="entry name" value="PolyA_RNA-bd"/>
</dbReference>
<dbReference type="InterPro" id="IPR050124">
    <property type="entry name" value="tRNA_CCA-adding_enzyme"/>
</dbReference>
<dbReference type="NCBIfam" id="NF008137">
    <property type="entry name" value="PRK10885.1"/>
    <property type="match status" value="1"/>
</dbReference>
<dbReference type="PANTHER" id="PTHR47545">
    <property type="entry name" value="MULTIFUNCTIONAL CCA PROTEIN"/>
    <property type="match status" value="1"/>
</dbReference>
<dbReference type="PANTHER" id="PTHR47545:SF1">
    <property type="entry name" value="MULTIFUNCTIONAL CCA PROTEIN"/>
    <property type="match status" value="1"/>
</dbReference>
<dbReference type="Pfam" id="PF01966">
    <property type="entry name" value="HD"/>
    <property type="match status" value="1"/>
</dbReference>
<dbReference type="Pfam" id="PF01743">
    <property type="entry name" value="PolyA_pol"/>
    <property type="match status" value="1"/>
</dbReference>
<dbReference type="Pfam" id="PF12627">
    <property type="entry name" value="PolyA_pol_RNAbd"/>
    <property type="match status" value="1"/>
</dbReference>
<dbReference type="PIRSF" id="PIRSF000813">
    <property type="entry name" value="CCA_bact"/>
    <property type="match status" value="1"/>
</dbReference>
<dbReference type="SMART" id="SM00471">
    <property type="entry name" value="HDc"/>
    <property type="match status" value="1"/>
</dbReference>
<dbReference type="SUPFAM" id="SSF81301">
    <property type="entry name" value="Nucleotidyltransferase"/>
    <property type="match status" value="1"/>
</dbReference>
<dbReference type="SUPFAM" id="SSF81891">
    <property type="entry name" value="Poly A polymerase C-terminal region-like"/>
    <property type="match status" value="1"/>
</dbReference>
<dbReference type="PROSITE" id="PS51831">
    <property type="entry name" value="HD"/>
    <property type="match status" value="1"/>
</dbReference>